<name>DCL1_PHANO</name>
<sequence>MTWAGDVEEQDDYFSCSDVSTSGDRRKRAPQTVTQEEVDQATSKIANEGQLSIRDILASQDTAVRITNPRDYQMELFLRAKMQNTIAVLDTGTGKTHIATLLLRHVLEEELENRAKGCAHKMAFFLVDSVNLVFQQANVLRCGLDQGVEGISGAMGQSLFQKQTWDKLFAVNMVIVCTAQVLVDCMMHSFMSISRMNLLIFDEAHHAKSNHPYARVMKDYYAHELDTSKRPRIFAMTASPVDVKGQSAEHVREAARELETLLHSRIATTSDSALARNSITRPEEEVAVYTRLRNEFETPLHQKVKAKYGDVAPFRKLFITAKLHASELGRWASDMYWSFAFADEQSRKLQIREELKYNRSKRDWSAAELDAQMARLKEATAFVQQYEIGAPTLSEQDLSSKVMKLQYWLNLYYERTTLARCIVFVEKRHTAQLLKLIFDHIGGPNLHCDVLVGINNRAGEENVSLRSQILTLQKFRRGELNCLFATSVAEEGLDIPQCNLVVRFDLYRTMIGYVQSRGRARHRNSKYLHMLEAENKEHTERLMNARHDENIMREFCKDLTHDRQLGDVEQEKAELIALEDKLFPSYTDEKSGAKLTYRSSLSILSHFVATYPSPDHNTMAQPTYVVNPKISDDPRDPQRNGFVCEVILPEHCPIISMVGQVYSRKTIAKCSAAFKMCIELRRKDHLNEFLLPTISKYLPAMRNALLAVSEKKKGNYAMVIKPTFWKQDRDTVPESLHLTIIDADRGLDRPHQPLAMLTRRPFPQLPSFPIYLTDCRPSNIVSQSLHIPISLTPELLEMFTRFTLRIFEDIYNKVYDYDVSKMSYWMLPVIEHRVASVRSMSNPQEVLDMDQIRKVYNEPFWKWSPQSRTDDLIDRYFVDPMNGGRRYYSDRLAPHLKPQDPVPANVPRQNHKFMKNILDFSDSKWMKSRDITRWHQDQPVLQVEKIPFRRNHLANVEDKEKKELANLETYICPEPLHISNLATPFVVMCYVLPAIIHRFESYLIALDACDVLDLKVSPALALEALTKDSDNSEEHGEEKINFKSGMGPNYERLEFLGDCFLKVATSLSVFVQQPEENEFEFHVRRMLMLCNQNLMETAVGKKKLYKYVRTDAFSRRNWYPEGLKLLRGKGLKKTEEDWLNVTHNLGDKSVADVCEAFIGAAFMQHHKGGQWTPNDWDEAVKAVKLFANSDDHLMEKWTDYYAAYTKPKYQTAGATATQLDLAHKIEMKHPYRFRYPRLLRSAFIHPSQPFMWENIPSYQRLEFLGDSLLDMAFIMHLFYKYPDKDPQWLTEHKTPMVSNKFLGAVCVKLGWHTHMKQNTAILSSQIRDYVYEVEEAEREANGAVDYWVSVSEPPKCLADVIEAFVAAIFVDSEFDFNVVQKFFDLHLKPFFLDMTLDAYENFASNHPTTRLSRLLSINFGCSEWRMGALETETLIPGKGKAIAAMVMIHDKVHFHSLGQSGRYARVRASHAALEKLEGLPPYEFRSKYGCDCVDEGEGEAGVDEAAVSKKVELMREAIGPSI</sequence>
<accession>Q0UI93</accession>
<gene>
    <name type="primary">DCL1</name>
    <name type="ORF">SNOG_08521</name>
</gene>
<proteinExistence type="inferred from homology"/>
<keyword id="KW-0051">Antiviral defense</keyword>
<keyword id="KW-0930">Antiviral protein</keyword>
<keyword id="KW-0067">ATP-binding</keyword>
<keyword id="KW-0347">Helicase</keyword>
<keyword id="KW-0378">Hydrolase</keyword>
<keyword id="KW-0460">Magnesium</keyword>
<keyword id="KW-0464">Manganese</keyword>
<keyword id="KW-0479">Metal-binding</keyword>
<keyword id="KW-0547">Nucleotide-binding</keyword>
<keyword id="KW-0677">Repeat</keyword>
<keyword id="KW-0694">RNA-binding</keyword>
<keyword id="KW-0862">Zinc</keyword>
<protein>
    <recommendedName>
        <fullName>Dicer-like protein 1</fullName>
    </recommendedName>
    <domain>
        <recommendedName>
            <fullName>Endoribonuclease DCL1</fullName>
            <ecNumber>3.1.26.-</ecNumber>
        </recommendedName>
    </domain>
    <domain>
        <recommendedName>
            <fullName>ATP-dependent helicase DCL1</fullName>
            <ecNumber>3.6.4.-</ecNumber>
        </recommendedName>
    </domain>
</protein>
<reference key="1">
    <citation type="journal article" date="2007" name="Plant Cell">
        <title>Dothideomycete-plant interactions illuminated by genome sequencing and EST analysis of the wheat pathogen Stagonospora nodorum.</title>
        <authorList>
            <person name="Hane J.K."/>
            <person name="Lowe R.G.T."/>
            <person name="Solomon P.S."/>
            <person name="Tan K.-C."/>
            <person name="Schoch C.L."/>
            <person name="Spatafora J.W."/>
            <person name="Crous P.W."/>
            <person name="Kodira C.D."/>
            <person name="Birren B.W."/>
            <person name="Galagan J.E."/>
            <person name="Torriani S.F.F."/>
            <person name="McDonald B.A."/>
            <person name="Oliver R.P."/>
        </authorList>
    </citation>
    <scope>NUCLEOTIDE SEQUENCE [LARGE SCALE GENOMIC DNA]</scope>
    <source>
        <strain>SN15 / ATCC MYA-4574 / FGSC 10173</strain>
    </source>
</reference>
<evidence type="ECO:0000250" key="1"/>
<evidence type="ECO:0000250" key="2">
    <source>
        <dbReference type="UniProtKB" id="Q09884"/>
    </source>
</evidence>
<evidence type="ECO:0000255" key="3">
    <source>
        <dbReference type="PROSITE-ProRule" id="PRU00142"/>
    </source>
</evidence>
<evidence type="ECO:0000255" key="4">
    <source>
        <dbReference type="PROSITE-ProRule" id="PRU00177"/>
    </source>
</evidence>
<evidence type="ECO:0000255" key="5">
    <source>
        <dbReference type="PROSITE-ProRule" id="PRU00541"/>
    </source>
</evidence>
<evidence type="ECO:0000255" key="6">
    <source>
        <dbReference type="PROSITE-ProRule" id="PRU00542"/>
    </source>
</evidence>
<evidence type="ECO:0000255" key="7">
    <source>
        <dbReference type="PROSITE-ProRule" id="PRU00657"/>
    </source>
</evidence>
<evidence type="ECO:0000256" key="8">
    <source>
        <dbReference type="SAM" id="MobiDB-lite"/>
    </source>
</evidence>
<evidence type="ECO:0000305" key="9"/>
<organism>
    <name type="scientific">Phaeosphaeria nodorum (strain SN15 / ATCC MYA-4574 / FGSC 10173)</name>
    <name type="common">Glume blotch fungus</name>
    <name type="synonym">Parastagonospora nodorum</name>
    <dbReference type="NCBI Taxonomy" id="321614"/>
    <lineage>
        <taxon>Eukaryota</taxon>
        <taxon>Fungi</taxon>
        <taxon>Dikarya</taxon>
        <taxon>Ascomycota</taxon>
        <taxon>Pezizomycotina</taxon>
        <taxon>Dothideomycetes</taxon>
        <taxon>Pleosporomycetidae</taxon>
        <taxon>Pleosporales</taxon>
        <taxon>Pleosporineae</taxon>
        <taxon>Phaeosphaeriaceae</taxon>
        <taxon>Parastagonospora</taxon>
    </lineage>
</organism>
<dbReference type="EC" id="3.1.26.-"/>
<dbReference type="EC" id="3.6.4.-"/>
<dbReference type="EMBL" id="CH445337">
    <property type="protein sequence ID" value="EAT83689.2"/>
    <property type="status" value="ALT_SEQ"/>
    <property type="molecule type" value="Genomic_DNA"/>
</dbReference>
<dbReference type="RefSeq" id="XP_001798832.1">
    <property type="nucleotide sequence ID" value="XM_001798780.1"/>
</dbReference>
<dbReference type="SMR" id="Q0UI93"/>
<dbReference type="STRING" id="321614.Q0UI93"/>
<dbReference type="GeneID" id="5975731"/>
<dbReference type="KEGG" id="pno:SNOG_08521"/>
<dbReference type="VEuPathDB" id="FungiDB:JI435_085210"/>
<dbReference type="InParanoid" id="Q0UI93"/>
<dbReference type="Proteomes" id="UP000001055">
    <property type="component" value="Unassembled WGS sequence"/>
</dbReference>
<dbReference type="GO" id="GO:0005737">
    <property type="term" value="C:cytoplasm"/>
    <property type="evidence" value="ECO:0000318"/>
    <property type="project" value="GO_Central"/>
</dbReference>
<dbReference type="GO" id="GO:0005634">
    <property type="term" value="C:nucleus"/>
    <property type="evidence" value="ECO:0000318"/>
    <property type="project" value="GO_Central"/>
</dbReference>
<dbReference type="GO" id="GO:0005524">
    <property type="term" value="F:ATP binding"/>
    <property type="evidence" value="ECO:0007669"/>
    <property type="project" value="UniProtKB-KW"/>
</dbReference>
<dbReference type="GO" id="GO:0003677">
    <property type="term" value="F:DNA binding"/>
    <property type="evidence" value="ECO:0007669"/>
    <property type="project" value="InterPro"/>
</dbReference>
<dbReference type="GO" id="GO:0004386">
    <property type="term" value="F:helicase activity"/>
    <property type="evidence" value="ECO:0007669"/>
    <property type="project" value="UniProtKB-KW"/>
</dbReference>
<dbReference type="GO" id="GO:0046872">
    <property type="term" value="F:metal ion binding"/>
    <property type="evidence" value="ECO:0007669"/>
    <property type="project" value="UniProtKB-KW"/>
</dbReference>
<dbReference type="GO" id="GO:0004525">
    <property type="term" value="F:ribonuclease III activity"/>
    <property type="evidence" value="ECO:0000318"/>
    <property type="project" value="GO_Central"/>
</dbReference>
<dbReference type="GO" id="GO:0003723">
    <property type="term" value="F:RNA binding"/>
    <property type="evidence" value="ECO:0000318"/>
    <property type="project" value="GO_Central"/>
</dbReference>
<dbReference type="GO" id="GO:0051607">
    <property type="term" value="P:defense response to virus"/>
    <property type="evidence" value="ECO:0007669"/>
    <property type="project" value="UniProtKB-KW"/>
</dbReference>
<dbReference type="GO" id="GO:0050688">
    <property type="term" value="P:regulation of defense response to virus"/>
    <property type="evidence" value="ECO:0007669"/>
    <property type="project" value="UniProtKB-KW"/>
</dbReference>
<dbReference type="GO" id="GO:0030422">
    <property type="term" value="P:siRNA processing"/>
    <property type="evidence" value="ECO:0000318"/>
    <property type="project" value="GO_Central"/>
</dbReference>
<dbReference type="CDD" id="cd18034">
    <property type="entry name" value="DEXHc_dicer"/>
    <property type="match status" value="1"/>
</dbReference>
<dbReference type="CDD" id="cd00593">
    <property type="entry name" value="RIBOc"/>
    <property type="match status" value="2"/>
</dbReference>
<dbReference type="CDD" id="cd18802">
    <property type="entry name" value="SF2_C_dicer"/>
    <property type="match status" value="1"/>
</dbReference>
<dbReference type="FunFam" id="1.10.1520.10:FF:000015">
    <property type="entry name" value="Dicer-like protein 1"/>
    <property type="match status" value="1"/>
</dbReference>
<dbReference type="FunFam" id="1.10.1520.10:FF:000026">
    <property type="entry name" value="Dicer-like protein 1"/>
    <property type="match status" value="1"/>
</dbReference>
<dbReference type="FunFam" id="3.30.160.380:FF:000004">
    <property type="entry name" value="Dicer-like protein 1"/>
    <property type="match status" value="1"/>
</dbReference>
<dbReference type="FunFam" id="3.40.50.300:FF:001669">
    <property type="entry name" value="Dicer-like protein 1"/>
    <property type="match status" value="1"/>
</dbReference>
<dbReference type="FunFam" id="3.40.50.300:FF:001988">
    <property type="entry name" value="Dicer-like protein 1"/>
    <property type="match status" value="1"/>
</dbReference>
<dbReference type="Gene3D" id="3.30.160.380">
    <property type="entry name" value="Dicer dimerisation domain"/>
    <property type="match status" value="1"/>
</dbReference>
<dbReference type="Gene3D" id="3.40.50.300">
    <property type="entry name" value="P-loop containing nucleotide triphosphate hydrolases"/>
    <property type="match status" value="2"/>
</dbReference>
<dbReference type="Gene3D" id="1.10.1520.10">
    <property type="entry name" value="Ribonuclease III domain"/>
    <property type="match status" value="2"/>
</dbReference>
<dbReference type="InterPro" id="IPR038248">
    <property type="entry name" value="Dicer_dimer_sf"/>
</dbReference>
<dbReference type="InterPro" id="IPR005034">
    <property type="entry name" value="Dicer_dimerisation_dom"/>
</dbReference>
<dbReference type="InterPro" id="IPR056755">
    <property type="entry name" value="DSRM_2"/>
</dbReference>
<dbReference type="InterPro" id="IPR006935">
    <property type="entry name" value="Helicase/UvrB_N"/>
</dbReference>
<dbReference type="InterPro" id="IPR014001">
    <property type="entry name" value="Helicase_ATP-bd"/>
</dbReference>
<dbReference type="InterPro" id="IPR001650">
    <property type="entry name" value="Helicase_C-like"/>
</dbReference>
<dbReference type="InterPro" id="IPR027417">
    <property type="entry name" value="P-loop_NTPase"/>
</dbReference>
<dbReference type="InterPro" id="IPR003100">
    <property type="entry name" value="PAZ_dom"/>
</dbReference>
<dbReference type="InterPro" id="IPR000999">
    <property type="entry name" value="RNase_III_dom"/>
</dbReference>
<dbReference type="InterPro" id="IPR036389">
    <property type="entry name" value="RNase_III_sf"/>
</dbReference>
<dbReference type="PANTHER" id="PTHR14950:SF62">
    <property type="entry name" value="DICER-LIKE PROTEIN 1"/>
    <property type="match status" value="1"/>
</dbReference>
<dbReference type="PANTHER" id="PTHR14950">
    <property type="entry name" value="DICER-RELATED"/>
    <property type="match status" value="1"/>
</dbReference>
<dbReference type="Pfam" id="PF03368">
    <property type="entry name" value="Dicer_dimer"/>
    <property type="match status" value="1"/>
</dbReference>
<dbReference type="Pfam" id="PF24995">
    <property type="entry name" value="DSRM_2"/>
    <property type="match status" value="1"/>
</dbReference>
<dbReference type="Pfam" id="PF00271">
    <property type="entry name" value="Helicase_C"/>
    <property type="match status" value="1"/>
</dbReference>
<dbReference type="Pfam" id="PF04851">
    <property type="entry name" value="ResIII"/>
    <property type="match status" value="1"/>
</dbReference>
<dbReference type="Pfam" id="PF00636">
    <property type="entry name" value="Ribonuclease_3"/>
    <property type="match status" value="2"/>
</dbReference>
<dbReference type="SMART" id="SM00487">
    <property type="entry name" value="DEXDc"/>
    <property type="match status" value="1"/>
</dbReference>
<dbReference type="SMART" id="SM00490">
    <property type="entry name" value="HELICc"/>
    <property type="match status" value="1"/>
</dbReference>
<dbReference type="SMART" id="SM00535">
    <property type="entry name" value="RIBOc"/>
    <property type="match status" value="2"/>
</dbReference>
<dbReference type="SUPFAM" id="SSF52540">
    <property type="entry name" value="P-loop containing nucleoside triphosphate hydrolases"/>
    <property type="match status" value="1"/>
</dbReference>
<dbReference type="SUPFAM" id="SSF69065">
    <property type="entry name" value="RNase III domain-like"/>
    <property type="match status" value="2"/>
</dbReference>
<dbReference type="PROSITE" id="PS51327">
    <property type="entry name" value="DICER_DSRBF"/>
    <property type="match status" value="1"/>
</dbReference>
<dbReference type="PROSITE" id="PS51192">
    <property type="entry name" value="HELICASE_ATP_BIND_1"/>
    <property type="match status" value="1"/>
</dbReference>
<dbReference type="PROSITE" id="PS51194">
    <property type="entry name" value="HELICASE_CTER"/>
    <property type="match status" value="1"/>
</dbReference>
<dbReference type="PROSITE" id="PS50821">
    <property type="entry name" value="PAZ"/>
    <property type="match status" value="1"/>
</dbReference>
<dbReference type="PROSITE" id="PS00517">
    <property type="entry name" value="RNASE_3_1"/>
    <property type="match status" value="1"/>
</dbReference>
<dbReference type="PROSITE" id="PS50142">
    <property type="entry name" value="RNASE_3_2"/>
    <property type="match status" value="2"/>
</dbReference>
<feature type="chain" id="PRO_0000306784" description="Dicer-like protein 1">
    <location>
        <begin position="1"/>
        <end position="1522"/>
    </location>
</feature>
<feature type="domain" description="Helicase ATP-binding" evidence="5">
    <location>
        <begin position="76"/>
        <end position="258"/>
    </location>
</feature>
<feature type="domain" description="Helicase C-terminal" evidence="6">
    <location>
        <begin position="408"/>
        <end position="576"/>
    </location>
</feature>
<feature type="domain" description="Dicer dsRNA-binding fold" evidence="7">
    <location>
        <begin position="600"/>
        <end position="700"/>
    </location>
</feature>
<feature type="domain" description="PAZ" evidence="3">
    <location>
        <begin position="859"/>
        <end position="980"/>
    </location>
</feature>
<feature type="domain" description="RNase III 1" evidence="4">
    <location>
        <begin position="995"/>
        <end position="1166"/>
    </location>
</feature>
<feature type="domain" description="RNase III 2" evidence="4">
    <location>
        <begin position="1222"/>
        <end position="1373"/>
    </location>
</feature>
<feature type="domain" description="DRBM">
    <location>
        <begin position="1409"/>
        <end position="1478"/>
    </location>
</feature>
<feature type="region of interest" description="Disordered" evidence="8">
    <location>
        <begin position="1"/>
        <end position="37"/>
    </location>
</feature>
<feature type="short sequence motif" description="DEAH box">
    <location>
        <begin position="202"/>
        <end position="205"/>
    </location>
</feature>
<feature type="compositionally biased region" description="Acidic residues" evidence="8">
    <location>
        <begin position="1"/>
        <end position="12"/>
    </location>
</feature>
<feature type="binding site" evidence="5">
    <location>
        <begin position="89"/>
        <end position="96"/>
    </location>
    <ligand>
        <name>ATP</name>
        <dbReference type="ChEBI" id="CHEBI:30616"/>
    </ligand>
</feature>
<feature type="binding site" evidence="1">
    <location>
        <position position="1262"/>
    </location>
    <ligand>
        <name>Mg(2+)</name>
        <dbReference type="ChEBI" id="CHEBI:18420"/>
    </ligand>
</feature>
<feature type="binding site" evidence="1">
    <location>
        <position position="1359"/>
    </location>
    <ligand>
        <name>Mg(2+)</name>
        <dbReference type="ChEBI" id="CHEBI:18420"/>
    </ligand>
</feature>
<feature type="binding site" evidence="1">
    <location>
        <position position="1362"/>
    </location>
    <ligand>
        <name>Mg(2+)</name>
        <dbReference type="ChEBI" id="CHEBI:18420"/>
    </ligand>
</feature>
<feature type="binding site" evidence="2">
    <location>
        <position position="1421"/>
    </location>
    <ligand>
        <name>Zn(2+)</name>
        <dbReference type="ChEBI" id="CHEBI:29105"/>
    </ligand>
</feature>
<feature type="binding site" evidence="2">
    <location>
        <position position="1449"/>
    </location>
    <ligand>
        <name>Zn(2+)</name>
        <dbReference type="ChEBI" id="CHEBI:29105"/>
    </ligand>
</feature>
<feature type="binding site" evidence="2">
    <location>
        <position position="1490"/>
    </location>
    <ligand>
        <name>Zn(2+)</name>
        <dbReference type="ChEBI" id="CHEBI:29105"/>
    </ligand>
</feature>
<feature type="binding site" evidence="2">
    <location>
        <position position="1492"/>
    </location>
    <ligand>
        <name>Zn(2+)</name>
        <dbReference type="ChEBI" id="CHEBI:29105"/>
    </ligand>
</feature>
<feature type="site" description="Important for activity" evidence="1">
    <location>
        <position position="1355"/>
    </location>
</feature>
<comment type="function">
    <text evidence="1">Dicer-like endonuclease involved in cleaving double-stranded RNA in the RNA interference (RNAi) pathway. Produces 21 to 25 bp dsRNAs (siRNAs) which target the selective destruction of homologous RNAs leading to sequence-specific suppression of gene expression, called post-transcriptional gene silencing (PTGS). Part of a broad host defense response against viral infection and transposons (By similarity).</text>
</comment>
<comment type="cofactor">
    <cofactor evidence="1">
        <name>Mg(2+)</name>
        <dbReference type="ChEBI" id="CHEBI:18420"/>
    </cofactor>
    <cofactor evidence="1">
        <name>Mn(2+)</name>
        <dbReference type="ChEBI" id="CHEBI:29035"/>
    </cofactor>
</comment>
<comment type="similarity">
    <text evidence="7">Belongs to the helicase family. Dicer subfamily.</text>
</comment>
<comment type="sequence caution" evidence="9">
    <conflict type="erroneous gene model prediction">
        <sequence resource="EMBL-CDS" id="EAT83689"/>
    </conflict>
</comment>